<protein>
    <recommendedName>
        <fullName>Mitochondrial inner membrane protease atp23</fullName>
        <ecNumber>3.4.24.-</ecNumber>
    </recommendedName>
</protein>
<comment type="function">
    <text evidence="1">Has a dual role in the assembly of mitochondrial ATPase. Acts as a protease that removes N-terminal residues of mitochondrial ATPase CF(0) subunit 6 at the intermembrane space side. Also involved in the correct assembly of the membrane-embedded ATPase CF(0) particle, probably mediating association of subunit 6 with the subunit 9 ring (By similarity).</text>
</comment>
<comment type="subcellular location">
    <subcellularLocation>
        <location>Mitochondrion inner membrane</location>
        <topology>Peripheral membrane protein</topology>
        <orientation>Intermembrane side</orientation>
    </subcellularLocation>
    <text evidence="1">Associates loosely with the inner membrane.</text>
</comment>
<comment type="similarity">
    <text evidence="4">Belongs to the peptidase M76 family.</text>
</comment>
<organism>
    <name type="scientific">Aspergillus niger (strain ATCC MYA-4892 / CBS 513.88 / FGSC A1513)</name>
    <dbReference type="NCBI Taxonomy" id="425011"/>
    <lineage>
        <taxon>Eukaryota</taxon>
        <taxon>Fungi</taxon>
        <taxon>Dikarya</taxon>
        <taxon>Ascomycota</taxon>
        <taxon>Pezizomycotina</taxon>
        <taxon>Eurotiomycetes</taxon>
        <taxon>Eurotiomycetidae</taxon>
        <taxon>Eurotiales</taxon>
        <taxon>Aspergillaceae</taxon>
        <taxon>Aspergillus</taxon>
        <taxon>Aspergillus subgen. Circumdati</taxon>
    </lineage>
</organism>
<feature type="chain" id="PRO_0000330054" description="Mitochondrial inner membrane protease atp23">
    <location>
        <begin position="1"/>
        <end position="237"/>
    </location>
</feature>
<feature type="region of interest" description="Disordered" evidence="3">
    <location>
        <begin position="1"/>
        <end position="24"/>
    </location>
</feature>
<feature type="compositionally biased region" description="Polar residues" evidence="3">
    <location>
        <begin position="1"/>
        <end position="18"/>
    </location>
</feature>
<feature type="active site" evidence="2">
    <location>
        <position position="137"/>
    </location>
</feature>
<feature type="binding site" evidence="1">
    <location>
        <position position="136"/>
    </location>
    <ligand>
        <name>a divalent metal cation</name>
        <dbReference type="ChEBI" id="CHEBI:60240"/>
        <note>catalytic</note>
    </ligand>
</feature>
<feature type="binding site" evidence="1">
    <location>
        <position position="140"/>
    </location>
    <ligand>
        <name>a divalent metal cation</name>
        <dbReference type="ChEBI" id="CHEBI:60240"/>
        <note>catalytic</note>
    </ligand>
</feature>
<keyword id="KW-0378">Hydrolase</keyword>
<keyword id="KW-0472">Membrane</keyword>
<keyword id="KW-0479">Metal-binding</keyword>
<keyword id="KW-0482">Metalloprotease</keyword>
<keyword id="KW-0496">Mitochondrion</keyword>
<keyword id="KW-0999">Mitochondrion inner membrane</keyword>
<keyword id="KW-0645">Protease</keyword>
<keyword id="KW-1185">Reference proteome</keyword>
<reference key="1">
    <citation type="journal article" date="2007" name="Nat. Biotechnol.">
        <title>Genome sequencing and analysis of the versatile cell factory Aspergillus niger CBS 513.88.</title>
        <authorList>
            <person name="Pel H.J."/>
            <person name="de Winde J.H."/>
            <person name="Archer D.B."/>
            <person name="Dyer P.S."/>
            <person name="Hofmann G."/>
            <person name="Schaap P.J."/>
            <person name="Turner G."/>
            <person name="de Vries R.P."/>
            <person name="Albang R."/>
            <person name="Albermann K."/>
            <person name="Andersen M.R."/>
            <person name="Bendtsen J.D."/>
            <person name="Benen J.A.E."/>
            <person name="van den Berg M."/>
            <person name="Breestraat S."/>
            <person name="Caddick M.X."/>
            <person name="Contreras R."/>
            <person name="Cornell M."/>
            <person name="Coutinho P.M."/>
            <person name="Danchin E.G.J."/>
            <person name="Debets A.J.M."/>
            <person name="Dekker P."/>
            <person name="van Dijck P.W.M."/>
            <person name="van Dijk A."/>
            <person name="Dijkhuizen L."/>
            <person name="Driessen A.J.M."/>
            <person name="d'Enfert C."/>
            <person name="Geysens S."/>
            <person name="Goosen C."/>
            <person name="Groot G.S.P."/>
            <person name="de Groot P.W.J."/>
            <person name="Guillemette T."/>
            <person name="Henrissat B."/>
            <person name="Herweijer M."/>
            <person name="van den Hombergh J.P.T.W."/>
            <person name="van den Hondel C.A.M.J.J."/>
            <person name="van der Heijden R.T.J.M."/>
            <person name="van der Kaaij R.M."/>
            <person name="Klis F.M."/>
            <person name="Kools H.J."/>
            <person name="Kubicek C.P."/>
            <person name="van Kuyk P.A."/>
            <person name="Lauber J."/>
            <person name="Lu X."/>
            <person name="van der Maarel M.J.E.C."/>
            <person name="Meulenberg R."/>
            <person name="Menke H."/>
            <person name="Mortimer M.A."/>
            <person name="Nielsen J."/>
            <person name="Oliver S.G."/>
            <person name="Olsthoorn M."/>
            <person name="Pal K."/>
            <person name="van Peij N.N.M.E."/>
            <person name="Ram A.F.J."/>
            <person name="Rinas U."/>
            <person name="Roubos J.A."/>
            <person name="Sagt C.M.J."/>
            <person name="Schmoll M."/>
            <person name="Sun J."/>
            <person name="Ussery D."/>
            <person name="Varga J."/>
            <person name="Vervecken W."/>
            <person name="van de Vondervoort P.J.J."/>
            <person name="Wedler H."/>
            <person name="Woesten H.A.B."/>
            <person name="Zeng A.-P."/>
            <person name="van Ooyen A.J.J."/>
            <person name="Visser J."/>
            <person name="Stam H."/>
        </authorList>
    </citation>
    <scope>NUCLEOTIDE SEQUENCE [LARGE SCALE GENOMIC DNA]</scope>
    <source>
        <strain>ATCC MYA-4892 / CBS 513.88 / FGSC A1513</strain>
    </source>
</reference>
<gene>
    <name type="primary">atp23</name>
    <name type="ORF">An05g00110</name>
</gene>
<dbReference type="EC" id="3.4.24.-"/>
<dbReference type="EMBL" id="AM270101">
    <property type="protein sequence ID" value="CAK44831.1"/>
    <property type="molecule type" value="Genomic_DNA"/>
</dbReference>
<dbReference type="RefSeq" id="XP_001390585.1">
    <property type="nucleotide sequence ID" value="XM_001390548.2"/>
</dbReference>
<dbReference type="MEROPS" id="M76.001"/>
<dbReference type="MEROPS" id="M76.002"/>
<dbReference type="EnsemblFungi" id="CAK44831">
    <property type="protein sequence ID" value="CAK44831"/>
    <property type="gene ID" value="An05g00110"/>
</dbReference>
<dbReference type="GeneID" id="4980756"/>
<dbReference type="KEGG" id="ang:An05g00110"/>
<dbReference type="VEuPathDB" id="FungiDB:An05g00110"/>
<dbReference type="HOGENOM" id="CLU_079125_0_0_1"/>
<dbReference type="Proteomes" id="UP000006706">
    <property type="component" value="Chromosome 7L"/>
</dbReference>
<dbReference type="GO" id="GO:0005743">
    <property type="term" value="C:mitochondrial inner membrane"/>
    <property type="evidence" value="ECO:0007669"/>
    <property type="project" value="UniProtKB-SubCell"/>
</dbReference>
<dbReference type="GO" id="GO:0046872">
    <property type="term" value="F:metal ion binding"/>
    <property type="evidence" value="ECO:0007669"/>
    <property type="project" value="UniProtKB-KW"/>
</dbReference>
<dbReference type="GO" id="GO:0004222">
    <property type="term" value="F:metalloendopeptidase activity"/>
    <property type="evidence" value="ECO:0007669"/>
    <property type="project" value="InterPro"/>
</dbReference>
<dbReference type="GO" id="GO:0034982">
    <property type="term" value="P:mitochondrial protein processing"/>
    <property type="evidence" value="ECO:0007669"/>
    <property type="project" value="TreeGrafter"/>
</dbReference>
<dbReference type="GO" id="GO:0033615">
    <property type="term" value="P:mitochondrial proton-transporting ATP synthase complex assembly"/>
    <property type="evidence" value="ECO:0007669"/>
    <property type="project" value="TreeGrafter"/>
</dbReference>
<dbReference type="InterPro" id="IPR019165">
    <property type="entry name" value="Peptidase_M76_ATP23"/>
</dbReference>
<dbReference type="PANTHER" id="PTHR21711">
    <property type="entry name" value="MITOCHONDRIAL INNER MEMBRANE PROTEASE"/>
    <property type="match status" value="1"/>
</dbReference>
<dbReference type="PANTHER" id="PTHR21711:SF0">
    <property type="entry name" value="MITOCHONDRIAL INNER MEMBRANE PROTEASE ATP23 HOMOLOG"/>
    <property type="match status" value="1"/>
</dbReference>
<dbReference type="Pfam" id="PF09768">
    <property type="entry name" value="Peptidase_M76"/>
    <property type="match status" value="1"/>
</dbReference>
<dbReference type="PROSITE" id="PS00142">
    <property type="entry name" value="ZINC_PROTEASE"/>
    <property type="match status" value="1"/>
</dbReference>
<sequence length="237" mass="27750">MSTSESSNNGSQPGNQDTGYIPGDDTWTQWRNIFSILAGRMTDEGKEQFRVARDIRNEVADCKRCEDQRDYLLQFSPIIRFMSDSIRQLGGDLHSHNIYCRRCTNRKAGGFDPDYGILICANEMKDQGHLEDTMAHEMVHAYDHLRFKVDWMNNLRHAACTEIRASSLSGECRWAREFFRRGQWKFTQQHQECVRRRAILSVRARPGCKDEAHAEKVVNEVWDSCFRDTRPFDEIYR</sequence>
<name>ATP23_ASPNC</name>
<evidence type="ECO:0000250" key="1"/>
<evidence type="ECO:0000255" key="2">
    <source>
        <dbReference type="PROSITE-ProRule" id="PRU10095"/>
    </source>
</evidence>
<evidence type="ECO:0000256" key="3">
    <source>
        <dbReference type="SAM" id="MobiDB-lite"/>
    </source>
</evidence>
<evidence type="ECO:0000305" key="4"/>
<accession>A2QKG2</accession>
<proteinExistence type="inferred from homology"/>